<keyword id="KW-1185">Reference proteome</keyword>
<keyword id="KW-0687">Ribonucleoprotein</keyword>
<keyword id="KW-0689">Ribosomal protein</keyword>
<keyword id="KW-0694">RNA-binding</keyword>
<keyword id="KW-0699">rRNA-binding</keyword>
<protein>
    <recommendedName>
        <fullName evidence="1">Large ribosomal subunit protein uL4</fullName>
    </recommendedName>
    <alternativeName>
        <fullName evidence="3">50S ribosomal protein L4</fullName>
    </alternativeName>
</protein>
<organism>
    <name type="scientific">Corynebacterium efficiens (strain DSM 44549 / YS-314 / AJ 12310 / JCM 11189 / NBRC 100395)</name>
    <dbReference type="NCBI Taxonomy" id="196164"/>
    <lineage>
        <taxon>Bacteria</taxon>
        <taxon>Bacillati</taxon>
        <taxon>Actinomycetota</taxon>
        <taxon>Actinomycetes</taxon>
        <taxon>Mycobacteriales</taxon>
        <taxon>Corynebacteriaceae</taxon>
        <taxon>Corynebacterium</taxon>
    </lineage>
</organism>
<name>RL4_COREF</name>
<feature type="chain" id="PRO_0000129211" description="Large ribosomal subunit protein uL4">
    <location>
        <begin position="1"/>
        <end position="218"/>
    </location>
</feature>
<feature type="region of interest" description="Disordered" evidence="2">
    <location>
        <begin position="46"/>
        <end position="100"/>
    </location>
</feature>
<feature type="compositionally biased region" description="Basic residues" evidence="2">
    <location>
        <begin position="62"/>
        <end position="73"/>
    </location>
</feature>
<proteinExistence type="inferred from homology"/>
<accession>Q8FS79</accession>
<comment type="function">
    <text evidence="1">One of the primary rRNA binding proteins, this protein initially binds near the 5'-end of the 23S rRNA. It is important during the early stages of 50S assembly. It makes multiple contacts with different domains of the 23S rRNA in the assembled 50S subunit and ribosome.</text>
</comment>
<comment type="function">
    <text evidence="1">Forms part of the polypeptide exit tunnel.</text>
</comment>
<comment type="subunit">
    <text evidence="1">Part of the 50S ribosomal subunit.</text>
</comment>
<comment type="similarity">
    <text evidence="1">Belongs to the universal ribosomal protein uL4 family.</text>
</comment>
<reference key="1">
    <citation type="journal article" date="2003" name="Genome Res.">
        <title>Comparative complete genome sequence analysis of the amino acid replacements responsible for the thermostability of Corynebacterium efficiens.</title>
        <authorList>
            <person name="Nishio Y."/>
            <person name="Nakamura Y."/>
            <person name="Kawarabayasi Y."/>
            <person name="Usuda Y."/>
            <person name="Kimura E."/>
            <person name="Sugimoto S."/>
            <person name="Matsui K."/>
            <person name="Yamagishi A."/>
            <person name="Kikuchi H."/>
            <person name="Ikeo K."/>
            <person name="Gojobori T."/>
        </authorList>
    </citation>
    <scope>NUCLEOTIDE SEQUENCE [LARGE SCALE GENOMIC DNA]</scope>
    <source>
        <strain>DSM 44549 / YS-314 / AJ 12310 / JCM 11189 / NBRC 100395</strain>
    </source>
</reference>
<dbReference type="EMBL" id="BA000035">
    <property type="protein sequence ID" value="BAC17333.1"/>
    <property type="molecule type" value="Genomic_DNA"/>
</dbReference>
<dbReference type="RefSeq" id="WP_006769803.1">
    <property type="nucleotide sequence ID" value="NC_004369.1"/>
</dbReference>
<dbReference type="SMR" id="Q8FS79"/>
<dbReference type="STRING" id="196164.gene:10740925"/>
<dbReference type="KEGG" id="cef:CE0523"/>
<dbReference type="eggNOG" id="COG0088">
    <property type="taxonomic scope" value="Bacteria"/>
</dbReference>
<dbReference type="HOGENOM" id="CLU_041575_5_0_11"/>
<dbReference type="OrthoDB" id="9803201at2"/>
<dbReference type="Proteomes" id="UP000001409">
    <property type="component" value="Chromosome"/>
</dbReference>
<dbReference type="GO" id="GO:1990904">
    <property type="term" value="C:ribonucleoprotein complex"/>
    <property type="evidence" value="ECO:0007669"/>
    <property type="project" value="UniProtKB-KW"/>
</dbReference>
<dbReference type="GO" id="GO:0005840">
    <property type="term" value="C:ribosome"/>
    <property type="evidence" value="ECO:0007669"/>
    <property type="project" value="UniProtKB-KW"/>
</dbReference>
<dbReference type="GO" id="GO:0019843">
    <property type="term" value="F:rRNA binding"/>
    <property type="evidence" value="ECO:0007669"/>
    <property type="project" value="UniProtKB-UniRule"/>
</dbReference>
<dbReference type="GO" id="GO:0003735">
    <property type="term" value="F:structural constituent of ribosome"/>
    <property type="evidence" value="ECO:0007669"/>
    <property type="project" value="InterPro"/>
</dbReference>
<dbReference type="GO" id="GO:0006412">
    <property type="term" value="P:translation"/>
    <property type="evidence" value="ECO:0007669"/>
    <property type="project" value="UniProtKB-UniRule"/>
</dbReference>
<dbReference type="FunFam" id="3.40.1370.10:FF:000004">
    <property type="entry name" value="50S ribosomal protein L4"/>
    <property type="match status" value="1"/>
</dbReference>
<dbReference type="Gene3D" id="3.40.1370.10">
    <property type="match status" value="1"/>
</dbReference>
<dbReference type="HAMAP" id="MF_01328_B">
    <property type="entry name" value="Ribosomal_uL4_B"/>
    <property type="match status" value="1"/>
</dbReference>
<dbReference type="InterPro" id="IPR002136">
    <property type="entry name" value="Ribosomal_uL4"/>
</dbReference>
<dbReference type="InterPro" id="IPR013005">
    <property type="entry name" value="Ribosomal_uL4-like"/>
</dbReference>
<dbReference type="InterPro" id="IPR023574">
    <property type="entry name" value="Ribosomal_uL4_dom_sf"/>
</dbReference>
<dbReference type="NCBIfam" id="TIGR03953">
    <property type="entry name" value="rplD_bact"/>
    <property type="match status" value="1"/>
</dbReference>
<dbReference type="PANTHER" id="PTHR10746">
    <property type="entry name" value="50S RIBOSOMAL PROTEIN L4"/>
    <property type="match status" value="1"/>
</dbReference>
<dbReference type="PANTHER" id="PTHR10746:SF6">
    <property type="entry name" value="LARGE RIBOSOMAL SUBUNIT PROTEIN UL4M"/>
    <property type="match status" value="1"/>
</dbReference>
<dbReference type="Pfam" id="PF00573">
    <property type="entry name" value="Ribosomal_L4"/>
    <property type="match status" value="1"/>
</dbReference>
<dbReference type="SUPFAM" id="SSF52166">
    <property type="entry name" value="Ribosomal protein L4"/>
    <property type="match status" value="1"/>
</dbReference>
<gene>
    <name evidence="1" type="primary">rplD</name>
    <name type="ordered locus">CE0523</name>
</gene>
<sequence>MTNLTLDVQTAEGTTNGSVDLPAEIFDREVSVALLHQVVNAQLAAARQGTHSTKTRAEVRGGGRKPFRQKGTGRARQGSIRAPHFTGGGISHGPKPRDYAQRTPKKMIKAALYGALSDRARNERIHVISELVPGQAPSTKSAKAFIERLTERKSVLLVIGREDINAQKSANNLPGVHILAADQLNTYDVLNSDDIVFSVEALHTFINRATGAAQEEQN</sequence>
<evidence type="ECO:0000255" key="1">
    <source>
        <dbReference type="HAMAP-Rule" id="MF_01328"/>
    </source>
</evidence>
<evidence type="ECO:0000256" key="2">
    <source>
        <dbReference type="SAM" id="MobiDB-lite"/>
    </source>
</evidence>
<evidence type="ECO:0000305" key="3"/>